<proteinExistence type="inferred from homology"/>
<evidence type="ECO:0000255" key="1">
    <source>
        <dbReference type="HAMAP-Rule" id="MF_00120"/>
    </source>
</evidence>
<name>GATA_RICB8</name>
<reference key="1">
    <citation type="submission" date="2007-09" db="EMBL/GenBank/DDBJ databases">
        <title>Complete genome sequencing of Rickettsia bellii.</title>
        <authorList>
            <person name="Madan A."/>
            <person name="Lee H."/>
            <person name="Madan A."/>
            <person name="Yoon J.-G."/>
            <person name="Ryu G.-Y."/>
            <person name="Dasch G."/>
            <person name="Ereemeva M."/>
        </authorList>
    </citation>
    <scope>NUCLEOTIDE SEQUENCE [LARGE SCALE GENOMIC DNA]</scope>
    <source>
        <strain>OSU 85-389</strain>
    </source>
</reference>
<keyword id="KW-0067">ATP-binding</keyword>
<keyword id="KW-0436">Ligase</keyword>
<keyword id="KW-0547">Nucleotide-binding</keyword>
<keyword id="KW-0648">Protein biosynthesis</keyword>
<gene>
    <name evidence="1" type="primary">gatA</name>
    <name type="ordered locus">A1I_01635</name>
</gene>
<protein>
    <recommendedName>
        <fullName evidence="1">Glutamyl-tRNA(Gln) amidotransferase subunit A</fullName>
        <shortName evidence="1">Glu-ADT subunit A</shortName>
        <ecNumber evidence="1">6.3.5.7</ecNumber>
    </recommendedName>
</protein>
<organism>
    <name type="scientific">Rickettsia bellii (strain OSU 85-389)</name>
    <dbReference type="NCBI Taxonomy" id="391896"/>
    <lineage>
        <taxon>Bacteria</taxon>
        <taxon>Pseudomonadati</taxon>
        <taxon>Pseudomonadota</taxon>
        <taxon>Alphaproteobacteria</taxon>
        <taxon>Rickettsiales</taxon>
        <taxon>Rickettsiaceae</taxon>
        <taxon>Rickettsieae</taxon>
        <taxon>Rickettsia</taxon>
        <taxon>belli group</taxon>
    </lineage>
</organism>
<sequence length="493" mass="53293">MTELNKLSVADSLKGLKNKEFTSKELVNAHIKQIEKHKNLNAYVTETFDLALKQAEEADQSYAKNHSRTLEGIPFAAKDLFCTKGIRTTACSNILREFIPNYESGVTQNIFNKGGVMLGKTNMDEFAMGSANITSCFGNVISPWKALDDGADLVPGGSSGGSAAAVSGFMATAALGSDTGGSVRQPASFTGLVGFKPTYGRCSRYGMVSFASSLDQAGIFTRSVLDSSIMLEAMIGFDERDSTSIKMEVPQLQPAIGSSIKGMKIGVPLSLGEGGIIEPDIMKMWHSTIELLKDAGAEIIDISLPHAKYGVAVYYVIAPAEASSNLSRYDGVRYGLRVEKENMSLDEMYEITRSSGFGDEVKRRIMIGTYVLSSSFMDAYYLKAQKVRRLVADDFNNAFAKVDAILLPSAPTEAFRIGEKQNDPTIMYLNDLFTIPASLAGLPCVSVPAGLSNRGLPLGMQVICKQLDEYNVLRVASAIEAGVKHIKFEPVGF</sequence>
<comment type="function">
    <text evidence="1">Allows the formation of correctly charged Gln-tRNA(Gln) through the transamidation of misacylated Glu-tRNA(Gln) in organisms which lack glutaminyl-tRNA synthetase. The reaction takes place in the presence of glutamine and ATP through an activated gamma-phospho-Glu-tRNA(Gln).</text>
</comment>
<comment type="catalytic activity">
    <reaction evidence="1">
        <text>L-glutamyl-tRNA(Gln) + L-glutamine + ATP + H2O = L-glutaminyl-tRNA(Gln) + L-glutamate + ADP + phosphate + H(+)</text>
        <dbReference type="Rhea" id="RHEA:17521"/>
        <dbReference type="Rhea" id="RHEA-COMP:9681"/>
        <dbReference type="Rhea" id="RHEA-COMP:9684"/>
        <dbReference type="ChEBI" id="CHEBI:15377"/>
        <dbReference type="ChEBI" id="CHEBI:15378"/>
        <dbReference type="ChEBI" id="CHEBI:29985"/>
        <dbReference type="ChEBI" id="CHEBI:30616"/>
        <dbReference type="ChEBI" id="CHEBI:43474"/>
        <dbReference type="ChEBI" id="CHEBI:58359"/>
        <dbReference type="ChEBI" id="CHEBI:78520"/>
        <dbReference type="ChEBI" id="CHEBI:78521"/>
        <dbReference type="ChEBI" id="CHEBI:456216"/>
        <dbReference type="EC" id="6.3.5.7"/>
    </reaction>
</comment>
<comment type="subunit">
    <text evidence="1">Heterotrimer of A, B and C subunits.</text>
</comment>
<comment type="similarity">
    <text evidence="1">Belongs to the amidase family. GatA subfamily.</text>
</comment>
<feature type="chain" id="PRO_1000015898" description="Glutamyl-tRNA(Gln) amidotransferase subunit A">
    <location>
        <begin position="1"/>
        <end position="493"/>
    </location>
</feature>
<feature type="active site" description="Charge relay system" evidence="1">
    <location>
        <position position="78"/>
    </location>
</feature>
<feature type="active site" description="Charge relay system" evidence="1">
    <location>
        <position position="158"/>
    </location>
</feature>
<feature type="active site" description="Acyl-ester intermediate" evidence="1">
    <location>
        <position position="182"/>
    </location>
</feature>
<accession>A8GV46</accession>
<dbReference type="EC" id="6.3.5.7" evidence="1"/>
<dbReference type="EMBL" id="CP000849">
    <property type="protein sequence ID" value="ABV78717.1"/>
    <property type="molecule type" value="Genomic_DNA"/>
</dbReference>
<dbReference type="RefSeq" id="WP_012151635.1">
    <property type="nucleotide sequence ID" value="NC_009883.1"/>
</dbReference>
<dbReference type="SMR" id="A8GV46"/>
<dbReference type="KEGG" id="rbo:A1I_01635"/>
<dbReference type="HOGENOM" id="CLU_009600_0_3_5"/>
<dbReference type="GO" id="GO:0030956">
    <property type="term" value="C:glutamyl-tRNA(Gln) amidotransferase complex"/>
    <property type="evidence" value="ECO:0007669"/>
    <property type="project" value="InterPro"/>
</dbReference>
<dbReference type="GO" id="GO:0005524">
    <property type="term" value="F:ATP binding"/>
    <property type="evidence" value="ECO:0007669"/>
    <property type="project" value="UniProtKB-KW"/>
</dbReference>
<dbReference type="GO" id="GO:0050567">
    <property type="term" value="F:glutaminyl-tRNA synthase (glutamine-hydrolyzing) activity"/>
    <property type="evidence" value="ECO:0007669"/>
    <property type="project" value="UniProtKB-UniRule"/>
</dbReference>
<dbReference type="GO" id="GO:0006412">
    <property type="term" value="P:translation"/>
    <property type="evidence" value="ECO:0007669"/>
    <property type="project" value="UniProtKB-UniRule"/>
</dbReference>
<dbReference type="Gene3D" id="3.90.1300.10">
    <property type="entry name" value="Amidase signature (AS) domain"/>
    <property type="match status" value="1"/>
</dbReference>
<dbReference type="HAMAP" id="MF_00120">
    <property type="entry name" value="GatA"/>
    <property type="match status" value="1"/>
</dbReference>
<dbReference type="InterPro" id="IPR000120">
    <property type="entry name" value="Amidase"/>
</dbReference>
<dbReference type="InterPro" id="IPR020556">
    <property type="entry name" value="Amidase_CS"/>
</dbReference>
<dbReference type="InterPro" id="IPR023631">
    <property type="entry name" value="Amidase_dom"/>
</dbReference>
<dbReference type="InterPro" id="IPR036928">
    <property type="entry name" value="AS_sf"/>
</dbReference>
<dbReference type="InterPro" id="IPR004412">
    <property type="entry name" value="GatA"/>
</dbReference>
<dbReference type="NCBIfam" id="TIGR00132">
    <property type="entry name" value="gatA"/>
    <property type="match status" value="1"/>
</dbReference>
<dbReference type="PANTHER" id="PTHR11895:SF151">
    <property type="entry name" value="GLUTAMYL-TRNA(GLN) AMIDOTRANSFERASE SUBUNIT A"/>
    <property type="match status" value="1"/>
</dbReference>
<dbReference type="PANTHER" id="PTHR11895">
    <property type="entry name" value="TRANSAMIDASE"/>
    <property type="match status" value="1"/>
</dbReference>
<dbReference type="Pfam" id="PF01425">
    <property type="entry name" value="Amidase"/>
    <property type="match status" value="1"/>
</dbReference>
<dbReference type="SUPFAM" id="SSF75304">
    <property type="entry name" value="Amidase signature (AS) enzymes"/>
    <property type="match status" value="1"/>
</dbReference>
<dbReference type="PROSITE" id="PS00571">
    <property type="entry name" value="AMIDASES"/>
    <property type="match status" value="1"/>
</dbReference>